<gene>
    <name type="ordered locus">At1g51120</name>
    <name type="ORF">F23H24.5</name>
</gene>
<comment type="function">
    <text evidence="1">Probably acts as a transcriptional activator. Binds to the GCC-box pathogenesis-related promoter element. May be involved in the regulation of gene expression by stress factors and by components of stress signal transduction pathways (By similarity).</text>
</comment>
<comment type="subcellular location">
    <subcellularLocation>
        <location evidence="5">Nucleus</location>
    </subcellularLocation>
</comment>
<comment type="similarity">
    <text evidence="5">Belongs to the AP2/ERF transcription factor family. RAV subfamily.</text>
</comment>
<sequence length="352" mass="40307">MDEMSNVAKTTTETSGLTDSVLSLTKRMKPTEVTTTTKPALSNTTKFKGVVQQQNGHWGAQIYADHRRIWLGTFKSAHEAAAAYDSASIKLRSFDANSHRNFPWSDFTLHEPDFQECYTTEAVLNMIRDGSYQHKFRDFLRIRSQIVANINIVGSKQVLGGGEGGQESNKCFSCTQLFQKELTPSDVGKLNRLVIPKKYAVKYMPFISDDQSEKETSEGVEDVEVVFYDRAMRQWKFRYCYWRSSQSFVFTRGWNGFVKEKNLKEKDIIVFYTCDVPNNVKTLEGQSKTFLMIDVHHFSGNGFVVPEEVNKTVHEISDEEMKTETLFTSKVEEETKSEEKKGGFMLFGVRIQ</sequence>
<organism>
    <name type="scientific">Arabidopsis thaliana</name>
    <name type="common">Mouse-ear cress</name>
    <dbReference type="NCBI Taxonomy" id="3702"/>
    <lineage>
        <taxon>Eukaryota</taxon>
        <taxon>Viridiplantae</taxon>
        <taxon>Streptophyta</taxon>
        <taxon>Embryophyta</taxon>
        <taxon>Tracheophyta</taxon>
        <taxon>Spermatophyta</taxon>
        <taxon>Magnoliopsida</taxon>
        <taxon>eudicotyledons</taxon>
        <taxon>Gunneridae</taxon>
        <taxon>Pentapetalae</taxon>
        <taxon>rosids</taxon>
        <taxon>malvids</taxon>
        <taxon>Brassicales</taxon>
        <taxon>Brassicaceae</taxon>
        <taxon>Camelineae</taxon>
        <taxon>Arabidopsis</taxon>
    </lineage>
</organism>
<keyword id="KW-0010">Activator</keyword>
<keyword id="KW-0238">DNA-binding</keyword>
<keyword id="KW-0936">Ethylene signaling pathway</keyword>
<keyword id="KW-0539">Nucleus</keyword>
<keyword id="KW-1185">Reference proteome</keyword>
<keyword id="KW-0804">Transcription</keyword>
<keyword id="KW-0805">Transcription regulation</keyword>
<evidence type="ECO:0000250" key="1"/>
<evidence type="ECO:0000255" key="2">
    <source>
        <dbReference type="PROSITE-ProRule" id="PRU00326"/>
    </source>
</evidence>
<evidence type="ECO:0000255" key="3">
    <source>
        <dbReference type="PROSITE-ProRule" id="PRU00366"/>
    </source>
</evidence>
<evidence type="ECO:0000256" key="4">
    <source>
        <dbReference type="SAM" id="MobiDB-lite"/>
    </source>
</evidence>
<evidence type="ECO:0000305" key="5"/>
<dbReference type="EMBL" id="AY560883">
    <property type="protein sequence ID" value="AAT44950.1"/>
    <property type="molecule type" value="mRNA"/>
</dbReference>
<dbReference type="EMBL" id="AC079828">
    <property type="protein sequence ID" value="AAG50531.1"/>
    <property type="molecule type" value="Genomic_DNA"/>
</dbReference>
<dbReference type="EMBL" id="CP002684">
    <property type="protein sequence ID" value="AEE32624.1"/>
    <property type="molecule type" value="Genomic_DNA"/>
</dbReference>
<dbReference type="PIR" id="F96548">
    <property type="entry name" value="F96548"/>
</dbReference>
<dbReference type="RefSeq" id="NP_175524.1">
    <property type="nucleotide sequence ID" value="NM_103991.1"/>
</dbReference>
<dbReference type="SMR" id="Q9C688"/>
<dbReference type="BioGRID" id="26760">
    <property type="interactions" value="15"/>
</dbReference>
<dbReference type="FunCoup" id="Q9C688">
    <property type="interactions" value="33"/>
</dbReference>
<dbReference type="IntAct" id="Q9C688">
    <property type="interactions" value="7"/>
</dbReference>
<dbReference type="STRING" id="3702.Q9C688"/>
<dbReference type="PaxDb" id="3702-AT1G51120.1"/>
<dbReference type="ProteomicsDB" id="236989"/>
<dbReference type="DNASU" id="841535"/>
<dbReference type="EnsemblPlants" id="AT1G51120.1">
    <property type="protein sequence ID" value="AT1G51120.1"/>
    <property type="gene ID" value="AT1G51120"/>
</dbReference>
<dbReference type="GeneID" id="841535"/>
<dbReference type="Gramene" id="AT1G51120.1">
    <property type="protein sequence ID" value="AT1G51120.1"/>
    <property type="gene ID" value="AT1G51120"/>
</dbReference>
<dbReference type="KEGG" id="ath:AT1G51120"/>
<dbReference type="Araport" id="AT1G51120"/>
<dbReference type="TAIR" id="AT1G51120"/>
<dbReference type="eggNOG" id="ENOG502QQEC">
    <property type="taxonomic scope" value="Eukaryota"/>
</dbReference>
<dbReference type="HOGENOM" id="CLU_038898_1_0_1"/>
<dbReference type="InParanoid" id="Q9C688"/>
<dbReference type="OMA" id="NESHRNF"/>
<dbReference type="PhylomeDB" id="Q9C688"/>
<dbReference type="PRO" id="PR:Q9C688"/>
<dbReference type="Proteomes" id="UP000006548">
    <property type="component" value="Chromosome 1"/>
</dbReference>
<dbReference type="ExpressionAtlas" id="Q9C688">
    <property type="expression patterns" value="baseline and differential"/>
</dbReference>
<dbReference type="GO" id="GO:0005634">
    <property type="term" value="C:nucleus"/>
    <property type="evidence" value="ECO:0007669"/>
    <property type="project" value="UniProtKB-SubCell"/>
</dbReference>
<dbReference type="GO" id="GO:0003677">
    <property type="term" value="F:DNA binding"/>
    <property type="evidence" value="ECO:0007669"/>
    <property type="project" value="UniProtKB-KW"/>
</dbReference>
<dbReference type="GO" id="GO:0003700">
    <property type="term" value="F:DNA-binding transcription factor activity"/>
    <property type="evidence" value="ECO:0000250"/>
    <property type="project" value="TAIR"/>
</dbReference>
<dbReference type="GO" id="GO:0009873">
    <property type="term" value="P:ethylene-activated signaling pathway"/>
    <property type="evidence" value="ECO:0007669"/>
    <property type="project" value="UniProtKB-KW"/>
</dbReference>
<dbReference type="CDD" id="cd00018">
    <property type="entry name" value="AP2"/>
    <property type="match status" value="1"/>
</dbReference>
<dbReference type="CDD" id="cd10017">
    <property type="entry name" value="B3_DNA"/>
    <property type="match status" value="1"/>
</dbReference>
<dbReference type="FunFam" id="3.30.730.10:FF:000008">
    <property type="entry name" value="AP2 domain-containing protein RAP2.8"/>
    <property type="match status" value="1"/>
</dbReference>
<dbReference type="FunFam" id="2.40.330.10:FF:000007">
    <property type="entry name" value="AP2/ERF and B3 domain-containing transcription factor RAV1"/>
    <property type="match status" value="1"/>
</dbReference>
<dbReference type="Gene3D" id="3.30.730.10">
    <property type="entry name" value="AP2/ERF domain"/>
    <property type="match status" value="1"/>
</dbReference>
<dbReference type="Gene3D" id="2.40.330.10">
    <property type="entry name" value="DNA-binding pseudobarrel domain"/>
    <property type="match status" value="1"/>
</dbReference>
<dbReference type="InterPro" id="IPR001471">
    <property type="entry name" value="AP2/ERF_dom"/>
</dbReference>
<dbReference type="InterPro" id="IPR036955">
    <property type="entry name" value="AP2/ERF_dom_sf"/>
</dbReference>
<dbReference type="InterPro" id="IPR003340">
    <property type="entry name" value="B3_DNA-bd"/>
</dbReference>
<dbReference type="InterPro" id="IPR016177">
    <property type="entry name" value="DNA-bd_dom_sf"/>
</dbReference>
<dbReference type="InterPro" id="IPR015300">
    <property type="entry name" value="DNA-bd_pseudobarrel_sf"/>
</dbReference>
<dbReference type="InterPro" id="IPR044800">
    <property type="entry name" value="LEC2-like"/>
</dbReference>
<dbReference type="PANTHER" id="PTHR31140:SF80">
    <property type="entry name" value="AP2_ERF AND B3 DOMAIN TRANSCRIPTION FACTOR"/>
    <property type="match status" value="1"/>
</dbReference>
<dbReference type="PANTHER" id="PTHR31140">
    <property type="entry name" value="B3 DOMAIN-CONTAINING TRANSCRIPTION FACTOR ABI3"/>
    <property type="match status" value="1"/>
</dbReference>
<dbReference type="Pfam" id="PF02362">
    <property type="entry name" value="B3"/>
    <property type="match status" value="1"/>
</dbReference>
<dbReference type="SMART" id="SM00380">
    <property type="entry name" value="AP2"/>
    <property type="match status" value="1"/>
</dbReference>
<dbReference type="SMART" id="SM01019">
    <property type="entry name" value="B3"/>
    <property type="match status" value="1"/>
</dbReference>
<dbReference type="SUPFAM" id="SSF54171">
    <property type="entry name" value="DNA-binding domain"/>
    <property type="match status" value="1"/>
</dbReference>
<dbReference type="SUPFAM" id="SSF101936">
    <property type="entry name" value="DNA-binding pseudobarrel domain"/>
    <property type="match status" value="1"/>
</dbReference>
<dbReference type="PROSITE" id="PS51032">
    <property type="entry name" value="AP2_ERF"/>
    <property type="match status" value="1"/>
</dbReference>
<dbReference type="PROSITE" id="PS50863">
    <property type="entry name" value="B3"/>
    <property type="match status" value="1"/>
</dbReference>
<feature type="chain" id="PRO_0000290435" description="AP2/ERF and B3 domain-containing transcription factor At1g51120">
    <location>
        <begin position="1"/>
        <end position="352"/>
    </location>
</feature>
<feature type="DNA-binding region" description="AP2/ERF" evidence="3">
    <location>
        <begin position="46"/>
        <end position="103"/>
    </location>
</feature>
<feature type="DNA-binding region" description="TF-B3" evidence="2">
    <location>
        <begin position="178"/>
        <end position="297"/>
    </location>
</feature>
<feature type="region of interest" description="Disordered" evidence="4">
    <location>
        <begin position="1"/>
        <end position="20"/>
    </location>
</feature>
<feature type="compositionally biased region" description="Polar residues" evidence="4">
    <location>
        <begin position="7"/>
        <end position="20"/>
    </location>
</feature>
<proteinExistence type="evidence at transcript level"/>
<accession>Q9C688</accession>
<reference key="1">
    <citation type="submission" date="2004-02" db="EMBL/GenBank/DDBJ databases">
        <title>Molecular cloning, expression, phylogenetic and functional characterization of the Arabidopsis AP2/EREBP transcription factor family.</title>
        <authorList>
            <person name="Pan Y."/>
            <person name="Gong W."/>
            <person name="Liu D."/>
            <person name="Fu Q."/>
            <person name="Mei W.-Q."/>
            <person name="Song W.-Q."/>
            <person name="Ma L.-G."/>
            <person name="Luo J.-C."/>
            <person name="Deng X.-W."/>
            <person name="Zhu Y.-X."/>
        </authorList>
    </citation>
    <scope>NUCLEOTIDE SEQUENCE [MRNA]</scope>
</reference>
<reference key="2">
    <citation type="journal article" date="2000" name="Nature">
        <title>Sequence and analysis of chromosome 1 of the plant Arabidopsis thaliana.</title>
        <authorList>
            <person name="Theologis A."/>
            <person name="Ecker J.R."/>
            <person name="Palm C.J."/>
            <person name="Federspiel N.A."/>
            <person name="Kaul S."/>
            <person name="White O."/>
            <person name="Alonso J."/>
            <person name="Altafi H."/>
            <person name="Araujo R."/>
            <person name="Bowman C.L."/>
            <person name="Brooks S.Y."/>
            <person name="Buehler E."/>
            <person name="Chan A."/>
            <person name="Chao Q."/>
            <person name="Chen H."/>
            <person name="Cheuk R.F."/>
            <person name="Chin C.W."/>
            <person name="Chung M.K."/>
            <person name="Conn L."/>
            <person name="Conway A.B."/>
            <person name="Conway A.R."/>
            <person name="Creasy T.H."/>
            <person name="Dewar K."/>
            <person name="Dunn P."/>
            <person name="Etgu P."/>
            <person name="Feldblyum T.V."/>
            <person name="Feng J.-D."/>
            <person name="Fong B."/>
            <person name="Fujii C.Y."/>
            <person name="Gill J.E."/>
            <person name="Goldsmith A.D."/>
            <person name="Haas B."/>
            <person name="Hansen N.F."/>
            <person name="Hughes B."/>
            <person name="Huizar L."/>
            <person name="Hunter J.L."/>
            <person name="Jenkins J."/>
            <person name="Johnson-Hopson C."/>
            <person name="Khan S."/>
            <person name="Khaykin E."/>
            <person name="Kim C.J."/>
            <person name="Koo H.L."/>
            <person name="Kremenetskaia I."/>
            <person name="Kurtz D.B."/>
            <person name="Kwan A."/>
            <person name="Lam B."/>
            <person name="Langin-Hooper S."/>
            <person name="Lee A."/>
            <person name="Lee J.M."/>
            <person name="Lenz C.A."/>
            <person name="Li J.H."/>
            <person name="Li Y.-P."/>
            <person name="Lin X."/>
            <person name="Liu S.X."/>
            <person name="Liu Z.A."/>
            <person name="Luros J.S."/>
            <person name="Maiti R."/>
            <person name="Marziali A."/>
            <person name="Militscher J."/>
            <person name="Miranda M."/>
            <person name="Nguyen M."/>
            <person name="Nierman W.C."/>
            <person name="Osborne B.I."/>
            <person name="Pai G."/>
            <person name="Peterson J."/>
            <person name="Pham P.K."/>
            <person name="Rizzo M."/>
            <person name="Rooney T."/>
            <person name="Rowley D."/>
            <person name="Sakano H."/>
            <person name="Salzberg S.L."/>
            <person name="Schwartz J.R."/>
            <person name="Shinn P."/>
            <person name="Southwick A.M."/>
            <person name="Sun H."/>
            <person name="Tallon L.J."/>
            <person name="Tambunga G."/>
            <person name="Toriumi M.J."/>
            <person name="Town C.D."/>
            <person name="Utterback T."/>
            <person name="Van Aken S."/>
            <person name="Vaysberg M."/>
            <person name="Vysotskaia V.S."/>
            <person name="Walker M."/>
            <person name="Wu D."/>
            <person name="Yu G."/>
            <person name="Fraser C.M."/>
            <person name="Venter J.C."/>
            <person name="Davis R.W."/>
        </authorList>
    </citation>
    <scope>NUCLEOTIDE SEQUENCE [LARGE SCALE GENOMIC DNA]</scope>
    <source>
        <strain>cv. Columbia</strain>
    </source>
</reference>
<reference key="3">
    <citation type="journal article" date="2017" name="Plant J.">
        <title>Araport11: a complete reannotation of the Arabidopsis thaliana reference genome.</title>
        <authorList>
            <person name="Cheng C.Y."/>
            <person name="Krishnakumar V."/>
            <person name="Chan A.P."/>
            <person name="Thibaud-Nissen F."/>
            <person name="Schobel S."/>
            <person name="Town C.D."/>
        </authorList>
    </citation>
    <scope>GENOME REANNOTATION</scope>
    <source>
        <strain>cv. Columbia</strain>
    </source>
</reference>
<reference key="4">
    <citation type="journal article" date="2006" name="Plant Physiol.">
        <title>Genome-wide analysis of the ERF gene family in Arabidopsis and rice.</title>
        <authorList>
            <person name="Nakano T."/>
            <person name="Suzuki K."/>
            <person name="Fujimura T."/>
            <person name="Shinshi H."/>
        </authorList>
    </citation>
    <scope>GENE FAMILY</scope>
    <scope>NOMENCLATURE</scope>
</reference>
<reference key="5">
    <citation type="journal article" date="2008" name="Trends Plant Sci.">
        <title>The plant B3 superfamily.</title>
        <authorList>
            <person name="Swaminathan K."/>
            <person name="Peterson K."/>
            <person name="Jack T."/>
        </authorList>
    </citation>
    <scope>GENE FAMILY</scope>
</reference>
<name>RAVL3_ARATH</name>
<protein>
    <recommendedName>
        <fullName>AP2/ERF and B3 domain-containing transcription factor At1g51120</fullName>
    </recommendedName>
    <alternativeName>
        <fullName>RAV1-like ethylene-responsive transcription factor At1g51120</fullName>
    </alternativeName>
</protein>